<dbReference type="EC" id="5.4.2.11" evidence="1"/>
<dbReference type="EMBL" id="AL591982">
    <property type="protein sequence ID" value="CAD00283.1"/>
    <property type="molecule type" value="Genomic_DNA"/>
</dbReference>
<dbReference type="PIR" id="AE1350">
    <property type="entry name" value="AE1350"/>
</dbReference>
<dbReference type="RefSeq" id="NP_465729.1">
    <property type="nucleotide sequence ID" value="NC_003210.1"/>
</dbReference>
<dbReference type="RefSeq" id="WP_010989925.1">
    <property type="nucleotide sequence ID" value="NZ_CP149495.1"/>
</dbReference>
<dbReference type="SMR" id="Q8Y571"/>
<dbReference type="STRING" id="169963.gene:17594896"/>
<dbReference type="PaxDb" id="169963-lmo2205"/>
<dbReference type="EnsemblBacteria" id="CAD00283">
    <property type="protein sequence ID" value="CAD00283"/>
    <property type="gene ID" value="CAD00283"/>
</dbReference>
<dbReference type="GeneID" id="986282"/>
<dbReference type="KEGG" id="lmo:lmo2205"/>
<dbReference type="PATRIC" id="fig|169963.11.peg.2257"/>
<dbReference type="eggNOG" id="COG0588">
    <property type="taxonomic scope" value="Bacteria"/>
</dbReference>
<dbReference type="HOGENOM" id="CLU_033323_1_1_9"/>
<dbReference type="OrthoDB" id="9781415at2"/>
<dbReference type="PhylomeDB" id="Q8Y571"/>
<dbReference type="BioCyc" id="LMON169963:LMO2205-MONOMER"/>
<dbReference type="UniPathway" id="UPA00109">
    <property type="reaction ID" value="UER00186"/>
</dbReference>
<dbReference type="Proteomes" id="UP000000817">
    <property type="component" value="Chromosome"/>
</dbReference>
<dbReference type="GO" id="GO:0004619">
    <property type="term" value="F:phosphoglycerate mutase activity"/>
    <property type="evidence" value="ECO:0007669"/>
    <property type="project" value="UniProtKB-EC"/>
</dbReference>
<dbReference type="GO" id="GO:0006094">
    <property type="term" value="P:gluconeogenesis"/>
    <property type="evidence" value="ECO:0007669"/>
    <property type="project" value="UniProtKB-UniRule"/>
</dbReference>
<dbReference type="GO" id="GO:0006096">
    <property type="term" value="P:glycolytic process"/>
    <property type="evidence" value="ECO:0007669"/>
    <property type="project" value="UniProtKB-UniRule"/>
</dbReference>
<dbReference type="CDD" id="cd07067">
    <property type="entry name" value="HP_PGM_like"/>
    <property type="match status" value="1"/>
</dbReference>
<dbReference type="FunFam" id="3.40.50.1240:FF:000003">
    <property type="entry name" value="2,3-bisphosphoglycerate-dependent phosphoglycerate mutase"/>
    <property type="match status" value="1"/>
</dbReference>
<dbReference type="Gene3D" id="3.40.50.1240">
    <property type="entry name" value="Phosphoglycerate mutase-like"/>
    <property type="match status" value="1"/>
</dbReference>
<dbReference type="HAMAP" id="MF_01039">
    <property type="entry name" value="PGAM_GpmA"/>
    <property type="match status" value="1"/>
</dbReference>
<dbReference type="InterPro" id="IPR013078">
    <property type="entry name" value="His_Pase_superF_clade-1"/>
</dbReference>
<dbReference type="InterPro" id="IPR029033">
    <property type="entry name" value="His_PPase_superfam"/>
</dbReference>
<dbReference type="InterPro" id="IPR001345">
    <property type="entry name" value="PG/BPGM_mutase_AS"/>
</dbReference>
<dbReference type="InterPro" id="IPR005952">
    <property type="entry name" value="Phosphogly_mut1"/>
</dbReference>
<dbReference type="NCBIfam" id="TIGR01258">
    <property type="entry name" value="pgm_1"/>
    <property type="match status" value="1"/>
</dbReference>
<dbReference type="NCBIfam" id="NF010713">
    <property type="entry name" value="PRK14115.1"/>
    <property type="match status" value="1"/>
</dbReference>
<dbReference type="PANTHER" id="PTHR11931">
    <property type="entry name" value="PHOSPHOGLYCERATE MUTASE"/>
    <property type="match status" value="1"/>
</dbReference>
<dbReference type="Pfam" id="PF00300">
    <property type="entry name" value="His_Phos_1"/>
    <property type="match status" value="2"/>
</dbReference>
<dbReference type="PIRSF" id="PIRSF000709">
    <property type="entry name" value="6PFK_2-Ptase"/>
    <property type="match status" value="1"/>
</dbReference>
<dbReference type="SMART" id="SM00855">
    <property type="entry name" value="PGAM"/>
    <property type="match status" value="1"/>
</dbReference>
<dbReference type="SUPFAM" id="SSF53254">
    <property type="entry name" value="Phosphoglycerate mutase-like"/>
    <property type="match status" value="1"/>
</dbReference>
<dbReference type="PROSITE" id="PS00175">
    <property type="entry name" value="PG_MUTASE"/>
    <property type="match status" value="1"/>
</dbReference>
<name>GPMA_LISMO</name>
<proteinExistence type="inferred from homology"/>
<comment type="function">
    <text evidence="1">Catalyzes the interconversion of 2-phosphoglycerate and 3-phosphoglycerate.</text>
</comment>
<comment type="catalytic activity">
    <reaction evidence="1">
        <text>(2R)-2-phosphoglycerate = (2R)-3-phosphoglycerate</text>
        <dbReference type="Rhea" id="RHEA:15901"/>
        <dbReference type="ChEBI" id="CHEBI:58272"/>
        <dbReference type="ChEBI" id="CHEBI:58289"/>
        <dbReference type="EC" id="5.4.2.11"/>
    </reaction>
</comment>
<comment type="pathway">
    <text evidence="1">Carbohydrate degradation; glycolysis; pyruvate from D-glyceraldehyde 3-phosphate: step 3/5.</text>
</comment>
<comment type="similarity">
    <text evidence="1">Belongs to the phosphoglycerate mutase family. BPG-dependent PGAM subfamily.</text>
</comment>
<organism>
    <name type="scientific">Listeria monocytogenes serovar 1/2a (strain ATCC BAA-679 / EGD-e)</name>
    <dbReference type="NCBI Taxonomy" id="169963"/>
    <lineage>
        <taxon>Bacteria</taxon>
        <taxon>Bacillati</taxon>
        <taxon>Bacillota</taxon>
        <taxon>Bacilli</taxon>
        <taxon>Bacillales</taxon>
        <taxon>Listeriaceae</taxon>
        <taxon>Listeria</taxon>
    </lineage>
</organism>
<keyword id="KW-0312">Gluconeogenesis</keyword>
<keyword id="KW-0324">Glycolysis</keyword>
<keyword id="KW-0413">Isomerase</keyword>
<keyword id="KW-1185">Reference proteome</keyword>
<feature type="chain" id="PRO_0000179890" description="2,3-bisphosphoglycerate-dependent phosphoglycerate mutase">
    <location>
        <begin position="1"/>
        <end position="229"/>
    </location>
</feature>
<feature type="active site" description="Tele-phosphohistidine intermediate" evidence="1">
    <location>
        <position position="8"/>
    </location>
</feature>
<feature type="active site" description="Proton donor/acceptor" evidence="1">
    <location>
        <position position="86"/>
    </location>
</feature>
<feature type="binding site" evidence="1">
    <location>
        <begin position="7"/>
        <end position="14"/>
    </location>
    <ligand>
        <name>substrate</name>
    </ligand>
</feature>
<feature type="binding site" evidence="1">
    <location>
        <begin position="20"/>
        <end position="21"/>
    </location>
    <ligand>
        <name>substrate</name>
    </ligand>
</feature>
<feature type="binding site" evidence="1">
    <location>
        <position position="59"/>
    </location>
    <ligand>
        <name>substrate</name>
    </ligand>
</feature>
<feature type="binding site" evidence="1">
    <location>
        <begin position="86"/>
        <end position="89"/>
    </location>
    <ligand>
        <name>substrate</name>
    </ligand>
</feature>
<feature type="binding site" evidence="1">
    <location>
        <position position="97"/>
    </location>
    <ligand>
        <name>substrate</name>
    </ligand>
</feature>
<feature type="binding site" evidence="1">
    <location>
        <begin position="113"/>
        <end position="114"/>
    </location>
    <ligand>
        <name>substrate</name>
    </ligand>
</feature>
<feature type="binding site" evidence="1">
    <location>
        <begin position="182"/>
        <end position="183"/>
    </location>
    <ligand>
        <name>substrate</name>
    </ligand>
</feature>
<feature type="site" description="Transition state stabilizer" evidence="1">
    <location>
        <position position="181"/>
    </location>
</feature>
<accession>Q8Y571</accession>
<reference key="1">
    <citation type="journal article" date="2001" name="Science">
        <title>Comparative genomics of Listeria species.</title>
        <authorList>
            <person name="Glaser P."/>
            <person name="Frangeul L."/>
            <person name="Buchrieser C."/>
            <person name="Rusniok C."/>
            <person name="Amend A."/>
            <person name="Baquero F."/>
            <person name="Berche P."/>
            <person name="Bloecker H."/>
            <person name="Brandt P."/>
            <person name="Chakraborty T."/>
            <person name="Charbit A."/>
            <person name="Chetouani F."/>
            <person name="Couve E."/>
            <person name="de Daruvar A."/>
            <person name="Dehoux P."/>
            <person name="Domann E."/>
            <person name="Dominguez-Bernal G."/>
            <person name="Duchaud E."/>
            <person name="Durant L."/>
            <person name="Dussurget O."/>
            <person name="Entian K.-D."/>
            <person name="Fsihi H."/>
            <person name="Garcia-del Portillo F."/>
            <person name="Garrido P."/>
            <person name="Gautier L."/>
            <person name="Goebel W."/>
            <person name="Gomez-Lopez N."/>
            <person name="Hain T."/>
            <person name="Hauf J."/>
            <person name="Jackson D."/>
            <person name="Jones L.-M."/>
            <person name="Kaerst U."/>
            <person name="Kreft J."/>
            <person name="Kuhn M."/>
            <person name="Kunst F."/>
            <person name="Kurapkat G."/>
            <person name="Madueno E."/>
            <person name="Maitournam A."/>
            <person name="Mata Vicente J."/>
            <person name="Ng E."/>
            <person name="Nedjari H."/>
            <person name="Nordsiek G."/>
            <person name="Novella S."/>
            <person name="de Pablos B."/>
            <person name="Perez-Diaz J.-C."/>
            <person name="Purcell R."/>
            <person name="Remmel B."/>
            <person name="Rose M."/>
            <person name="Schlueter T."/>
            <person name="Simoes N."/>
            <person name="Tierrez A."/>
            <person name="Vazquez-Boland J.-A."/>
            <person name="Voss H."/>
            <person name="Wehland J."/>
            <person name="Cossart P."/>
        </authorList>
    </citation>
    <scope>NUCLEOTIDE SEQUENCE [LARGE SCALE GENOMIC DNA]</scope>
    <source>
        <strain>ATCC BAA-679 / EGD-e</strain>
    </source>
</reference>
<protein>
    <recommendedName>
        <fullName evidence="1">2,3-bisphosphoglycerate-dependent phosphoglycerate mutase</fullName>
        <shortName evidence="1">BPG-dependent PGAM</shortName>
        <shortName evidence="1">PGAM</shortName>
        <shortName evidence="1">Phosphoglyceromutase</shortName>
        <shortName evidence="1">dPGM</shortName>
        <ecNumber evidence="1">5.4.2.11</ecNumber>
    </recommendedName>
</protein>
<sequence length="229" mass="26417">MKLVLIRHGQSEWNKLNLFTGWHDVDLSQEGVVEAMTAGKRIKEAGLEFDVAFTSVLTRAIKTLNYVLEESDQMWVPVHKSWRLNERHYGALQGLNKQETAEKYGADQVQKWRRSYDTLPPLLEENDERQAKNDRRYQLLDTHAIPSGENLKVTLERVIPYWMDTIAPEIKEGRRVVIAAHGNSLRALVKFLEGISDDEIMDLEIPTGVPLVYELNADLKPVNKYYLDK</sequence>
<gene>
    <name evidence="1" type="primary">gpmA</name>
    <name type="ordered locus">lmo2205</name>
</gene>
<evidence type="ECO:0000255" key="1">
    <source>
        <dbReference type="HAMAP-Rule" id="MF_01039"/>
    </source>
</evidence>